<gene>
    <name evidence="1" type="primary">murA</name>
    <name type="ordered locus">glr3125</name>
</gene>
<keyword id="KW-0131">Cell cycle</keyword>
<keyword id="KW-0132">Cell division</keyword>
<keyword id="KW-0133">Cell shape</keyword>
<keyword id="KW-0961">Cell wall biogenesis/degradation</keyword>
<keyword id="KW-0963">Cytoplasm</keyword>
<keyword id="KW-0573">Peptidoglycan synthesis</keyword>
<keyword id="KW-0670">Pyruvate</keyword>
<keyword id="KW-1185">Reference proteome</keyword>
<keyword id="KW-0808">Transferase</keyword>
<sequence>MGIEPSLPQSSPAPAKLTDPYLQIEGGYRLSGEVTISGAKNSSLALMAASLLTMEPCRLHNVPKLADIRMMSAILESLGVRVKPVAANTLDIDPRFLSVHRAPYELVNSLRASFFILGPILARLGMARIPLPGGCAIGARPVDLHVRGLQALGAQVRIEHGIVEARARKLRGGRIYLDYPSVGATETIMMAATLAEGETVIENAAQEPEVVDLANFCRSMGAHIRGAGSKTIVISGVPRLHGSEYHVIPDRIETGTFMAAAAITRSTLRIGPVFPEHLAAVLAKLREMGSVVNLVGPGTLEVSPGRVMAATDIETLPFPGFPTDMQAQFMSVLAVSEGTSIISETVFENRLMHVPELNRLGADIRVRSGHAIVRGVLKLSGAPVVATDLRASAALVIAGLAAHGTTTIAGLHHLDRGYESIERKLQALGARIERHLPSAPPSEVSSAVAAGPDAAAAPV</sequence>
<reference key="1">
    <citation type="journal article" date="2003" name="DNA Res.">
        <title>Complete genome structure of Gloeobacter violaceus PCC 7421, a cyanobacterium that lacks thylakoids.</title>
        <authorList>
            <person name="Nakamura Y."/>
            <person name="Kaneko T."/>
            <person name="Sato S."/>
            <person name="Mimuro M."/>
            <person name="Miyashita H."/>
            <person name="Tsuchiya T."/>
            <person name="Sasamoto S."/>
            <person name="Watanabe A."/>
            <person name="Kawashima K."/>
            <person name="Kishida Y."/>
            <person name="Kiyokawa C."/>
            <person name="Kohara M."/>
            <person name="Matsumoto M."/>
            <person name="Matsuno A."/>
            <person name="Nakazaki N."/>
            <person name="Shimpo S."/>
            <person name="Takeuchi C."/>
            <person name="Yamada M."/>
            <person name="Tabata S."/>
        </authorList>
    </citation>
    <scope>NUCLEOTIDE SEQUENCE [LARGE SCALE GENOMIC DNA]</scope>
    <source>
        <strain>ATCC 29082 / PCC 7421</strain>
    </source>
</reference>
<protein>
    <recommendedName>
        <fullName evidence="1">UDP-N-acetylglucosamine 1-carboxyvinyltransferase</fullName>
        <ecNumber evidence="1">2.5.1.7</ecNumber>
    </recommendedName>
    <alternativeName>
        <fullName evidence="1">Enoylpyruvate transferase</fullName>
    </alternativeName>
    <alternativeName>
        <fullName evidence="1">UDP-N-acetylglucosamine enolpyruvyl transferase</fullName>
        <shortName evidence="1">EPT</shortName>
    </alternativeName>
</protein>
<comment type="function">
    <text evidence="1">Cell wall formation. Adds enolpyruvyl to UDP-N-acetylglucosamine.</text>
</comment>
<comment type="catalytic activity">
    <reaction evidence="1">
        <text>phosphoenolpyruvate + UDP-N-acetyl-alpha-D-glucosamine = UDP-N-acetyl-3-O-(1-carboxyvinyl)-alpha-D-glucosamine + phosphate</text>
        <dbReference type="Rhea" id="RHEA:18681"/>
        <dbReference type="ChEBI" id="CHEBI:43474"/>
        <dbReference type="ChEBI" id="CHEBI:57705"/>
        <dbReference type="ChEBI" id="CHEBI:58702"/>
        <dbReference type="ChEBI" id="CHEBI:68483"/>
        <dbReference type="EC" id="2.5.1.7"/>
    </reaction>
</comment>
<comment type="pathway">
    <text evidence="1">Cell wall biogenesis; peptidoglycan biosynthesis.</text>
</comment>
<comment type="subcellular location">
    <subcellularLocation>
        <location evidence="1">Cytoplasm</location>
    </subcellularLocation>
</comment>
<comment type="similarity">
    <text evidence="1">Belongs to the EPSP synthase family. MurA subfamily.</text>
</comment>
<accession>Q7NGP3</accession>
<organism>
    <name type="scientific">Gloeobacter violaceus (strain ATCC 29082 / PCC 7421)</name>
    <dbReference type="NCBI Taxonomy" id="251221"/>
    <lineage>
        <taxon>Bacteria</taxon>
        <taxon>Bacillati</taxon>
        <taxon>Cyanobacteriota</taxon>
        <taxon>Cyanophyceae</taxon>
        <taxon>Gloeobacterales</taxon>
        <taxon>Gloeobacteraceae</taxon>
        <taxon>Gloeobacter</taxon>
    </lineage>
</organism>
<evidence type="ECO:0000255" key="1">
    <source>
        <dbReference type="HAMAP-Rule" id="MF_00111"/>
    </source>
</evidence>
<evidence type="ECO:0000256" key="2">
    <source>
        <dbReference type="SAM" id="MobiDB-lite"/>
    </source>
</evidence>
<proteinExistence type="inferred from homology"/>
<dbReference type="EC" id="2.5.1.7" evidence="1"/>
<dbReference type="EMBL" id="BA000045">
    <property type="protein sequence ID" value="BAC91066.1"/>
    <property type="molecule type" value="Genomic_DNA"/>
</dbReference>
<dbReference type="RefSeq" id="NP_926071.1">
    <property type="nucleotide sequence ID" value="NC_005125.1"/>
</dbReference>
<dbReference type="RefSeq" id="WP_011143118.1">
    <property type="nucleotide sequence ID" value="NC_005125.1"/>
</dbReference>
<dbReference type="SMR" id="Q7NGP3"/>
<dbReference type="FunCoup" id="Q7NGP3">
    <property type="interactions" value="70"/>
</dbReference>
<dbReference type="STRING" id="251221.gene:10760631"/>
<dbReference type="EnsemblBacteria" id="BAC91066">
    <property type="protein sequence ID" value="BAC91066"/>
    <property type="gene ID" value="BAC91066"/>
</dbReference>
<dbReference type="KEGG" id="gvi:glr3125"/>
<dbReference type="PATRIC" id="fig|251221.4.peg.3155"/>
<dbReference type="eggNOG" id="COG0766">
    <property type="taxonomic scope" value="Bacteria"/>
</dbReference>
<dbReference type="HOGENOM" id="CLU_027387_0_0_3"/>
<dbReference type="InParanoid" id="Q7NGP3"/>
<dbReference type="OrthoDB" id="9803760at2"/>
<dbReference type="PhylomeDB" id="Q7NGP3"/>
<dbReference type="UniPathway" id="UPA00219"/>
<dbReference type="Proteomes" id="UP000000557">
    <property type="component" value="Chromosome"/>
</dbReference>
<dbReference type="GO" id="GO:0005737">
    <property type="term" value="C:cytoplasm"/>
    <property type="evidence" value="ECO:0007669"/>
    <property type="project" value="UniProtKB-SubCell"/>
</dbReference>
<dbReference type="GO" id="GO:0008760">
    <property type="term" value="F:UDP-N-acetylglucosamine 1-carboxyvinyltransferase activity"/>
    <property type="evidence" value="ECO:0007669"/>
    <property type="project" value="UniProtKB-UniRule"/>
</dbReference>
<dbReference type="GO" id="GO:0051301">
    <property type="term" value="P:cell division"/>
    <property type="evidence" value="ECO:0007669"/>
    <property type="project" value="UniProtKB-KW"/>
</dbReference>
<dbReference type="GO" id="GO:0071555">
    <property type="term" value="P:cell wall organization"/>
    <property type="evidence" value="ECO:0007669"/>
    <property type="project" value="UniProtKB-KW"/>
</dbReference>
<dbReference type="GO" id="GO:0009252">
    <property type="term" value="P:peptidoglycan biosynthetic process"/>
    <property type="evidence" value="ECO:0007669"/>
    <property type="project" value="UniProtKB-UniRule"/>
</dbReference>
<dbReference type="GO" id="GO:0008360">
    <property type="term" value="P:regulation of cell shape"/>
    <property type="evidence" value="ECO:0007669"/>
    <property type="project" value="UniProtKB-KW"/>
</dbReference>
<dbReference type="GO" id="GO:0019277">
    <property type="term" value="P:UDP-N-acetylgalactosamine biosynthetic process"/>
    <property type="evidence" value="ECO:0007669"/>
    <property type="project" value="InterPro"/>
</dbReference>
<dbReference type="CDD" id="cd01555">
    <property type="entry name" value="UdpNAET"/>
    <property type="match status" value="1"/>
</dbReference>
<dbReference type="FunFam" id="3.65.10.10:FF:000001">
    <property type="entry name" value="UDP-N-acetylglucosamine 1-carboxyvinyltransferase"/>
    <property type="match status" value="1"/>
</dbReference>
<dbReference type="Gene3D" id="3.65.10.10">
    <property type="entry name" value="Enolpyruvate transferase domain"/>
    <property type="match status" value="2"/>
</dbReference>
<dbReference type="HAMAP" id="MF_00111">
    <property type="entry name" value="MurA"/>
    <property type="match status" value="1"/>
</dbReference>
<dbReference type="InterPro" id="IPR001986">
    <property type="entry name" value="Enolpyruvate_Tfrase_dom"/>
</dbReference>
<dbReference type="InterPro" id="IPR036968">
    <property type="entry name" value="Enolpyruvate_Tfrase_sf"/>
</dbReference>
<dbReference type="InterPro" id="IPR050068">
    <property type="entry name" value="MurA_subfamily"/>
</dbReference>
<dbReference type="InterPro" id="IPR013792">
    <property type="entry name" value="RNA3'P_cycl/enolpyr_Trfase_a/b"/>
</dbReference>
<dbReference type="InterPro" id="IPR005750">
    <property type="entry name" value="UDP_GlcNAc_COvinyl_MurA"/>
</dbReference>
<dbReference type="NCBIfam" id="TIGR01072">
    <property type="entry name" value="murA"/>
    <property type="match status" value="1"/>
</dbReference>
<dbReference type="NCBIfam" id="NF006873">
    <property type="entry name" value="PRK09369.1"/>
    <property type="match status" value="1"/>
</dbReference>
<dbReference type="PANTHER" id="PTHR43783">
    <property type="entry name" value="UDP-N-ACETYLGLUCOSAMINE 1-CARBOXYVINYLTRANSFERASE"/>
    <property type="match status" value="1"/>
</dbReference>
<dbReference type="PANTHER" id="PTHR43783:SF1">
    <property type="entry name" value="UDP-N-ACETYLGLUCOSAMINE 1-CARBOXYVINYLTRANSFERASE"/>
    <property type="match status" value="1"/>
</dbReference>
<dbReference type="Pfam" id="PF00275">
    <property type="entry name" value="EPSP_synthase"/>
    <property type="match status" value="1"/>
</dbReference>
<dbReference type="SUPFAM" id="SSF55205">
    <property type="entry name" value="EPT/RTPC-like"/>
    <property type="match status" value="1"/>
</dbReference>
<name>MURA_GLOVI</name>
<feature type="chain" id="PRO_0000231209" description="UDP-N-acetylglucosamine 1-carboxyvinyltransferase">
    <location>
        <begin position="1"/>
        <end position="459"/>
    </location>
</feature>
<feature type="region of interest" description="Disordered" evidence="2">
    <location>
        <begin position="437"/>
        <end position="459"/>
    </location>
</feature>
<feature type="compositionally biased region" description="Low complexity" evidence="2">
    <location>
        <begin position="441"/>
        <end position="459"/>
    </location>
</feature>
<feature type="active site" description="Proton donor" evidence="1">
    <location>
        <position position="135"/>
    </location>
</feature>
<feature type="binding site" evidence="1">
    <location>
        <begin position="40"/>
        <end position="41"/>
    </location>
    <ligand>
        <name>phosphoenolpyruvate</name>
        <dbReference type="ChEBI" id="CHEBI:58702"/>
    </ligand>
</feature>
<feature type="binding site" evidence="1">
    <location>
        <position position="111"/>
    </location>
    <ligand>
        <name>UDP-N-acetyl-alpha-D-glucosamine</name>
        <dbReference type="ChEBI" id="CHEBI:57705"/>
    </ligand>
</feature>
<feature type="binding site" evidence="1">
    <location>
        <begin position="140"/>
        <end position="144"/>
    </location>
    <ligand>
        <name>UDP-N-acetyl-alpha-D-glucosamine</name>
        <dbReference type="ChEBI" id="CHEBI:57705"/>
    </ligand>
</feature>
<feature type="binding site" evidence="1">
    <location>
        <position position="324"/>
    </location>
    <ligand>
        <name>UDP-N-acetyl-alpha-D-glucosamine</name>
        <dbReference type="ChEBI" id="CHEBI:57705"/>
    </ligand>
</feature>
<feature type="binding site" evidence="1">
    <location>
        <position position="346"/>
    </location>
    <ligand>
        <name>UDP-N-acetyl-alpha-D-glucosamine</name>
        <dbReference type="ChEBI" id="CHEBI:57705"/>
    </ligand>
</feature>
<feature type="modified residue" description="2-(S-cysteinyl)pyruvic acid O-phosphothioketal" evidence="1">
    <location>
        <position position="135"/>
    </location>
</feature>